<feature type="chain" id="PRO_1000095704" description="Tryptophan synthase alpha chain">
    <location>
        <begin position="1"/>
        <end position="268"/>
    </location>
</feature>
<feature type="active site" description="Proton acceptor" evidence="1">
    <location>
        <position position="47"/>
    </location>
</feature>
<feature type="active site" description="Proton acceptor" evidence="1">
    <location>
        <position position="58"/>
    </location>
</feature>
<keyword id="KW-0028">Amino-acid biosynthesis</keyword>
<keyword id="KW-0057">Aromatic amino acid biosynthesis</keyword>
<keyword id="KW-0456">Lyase</keyword>
<keyword id="KW-0822">Tryptophan biosynthesis</keyword>
<evidence type="ECO:0000255" key="1">
    <source>
        <dbReference type="HAMAP-Rule" id="MF_00131"/>
    </source>
</evidence>
<reference key="1">
    <citation type="submission" date="2008-06" db="EMBL/GenBank/DDBJ databases">
        <title>Complete sequence of Chlorobium phaeobacteroides BS1.</title>
        <authorList>
            <consortium name="US DOE Joint Genome Institute"/>
            <person name="Lucas S."/>
            <person name="Copeland A."/>
            <person name="Lapidus A."/>
            <person name="Glavina del Rio T."/>
            <person name="Dalin E."/>
            <person name="Tice H."/>
            <person name="Bruce D."/>
            <person name="Goodwin L."/>
            <person name="Pitluck S."/>
            <person name="Schmutz J."/>
            <person name="Larimer F."/>
            <person name="Land M."/>
            <person name="Hauser L."/>
            <person name="Kyrpides N."/>
            <person name="Ovchinnikova G."/>
            <person name="Li T."/>
            <person name="Liu Z."/>
            <person name="Zhao F."/>
            <person name="Overmann J."/>
            <person name="Bryant D.A."/>
            <person name="Richardson P."/>
        </authorList>
    </citation>
    <scope>NUCLEOTIDE SEQUENCE [LARGE SCALE GENOMIC DNA]</scope>
    <source>
        <strain>BS1</strain>
    </source>
</reference>
<dbReference type="EC" id="4.2.1.20" evidence="1"/>
<dbReference type="EMBL" id="CP001101">
    <property type="protein sequence ID" value="ACE03737.1"/>
    <property type="molecule type" value="Genomic_DNA"/>
</dbReference>
<dbReference type="SMR" id="B3ENW0"/>
<dbReference type="STRING" id="331678.Cphamn1_0786"/>
<dbReference type="KEGG" id="cpb:Cphamn1_0786"/>
<dbReference type="eggNOG" id="COG0159">
    <property type="taxonomic scope" value="Bacteria"/>
</dbReference>
<dbReference type="HOGENOM" id="CLU_016734_0_0_10"/>
<dbReference type="OrthoDB" id="9804578at2"/>
<dbReference type="UniPathway" id="UPA00035">
    <property type="reaction ID" value="UER00044"/>
</dbReference>
<dbReference type="GO" id="GO:0005829">
    <property type="term" value="C:cytosol"/>
    <property type="evidence" value="ECO:0007669"/>
    <property type="project" value="TreeGrafter"/>
</dbReference>
<dbReference type="GO" id="GO:0004834">
    <property type="term" value="F:tryptophan synthase activity"/>
    <property type="evidence" value="ECO:0007669"/>
    <property type="project" value="UniProtKB-UniRule"/>
</dbReference>
<dbReference type="CDD" id="cd04724">
    <property type="entry name" value="Tryptophan_synthase_alpha"/>
    <property type="match status" value="1"/>
</dbReference>
<dbReference type="Gene3D" id="3.20.20.70">
    <property type="entry name" value="Aldolase class I"/>
    <property type="match status" value="1"/>
</dbReference>
<dbReference type="HAMAP" id="MF_00131">
    <property type="entry name" value="Trp_synth_alpha"/>
    <property type="match status" value="1"/>
</dbReference>
<dbReference type="InterPro" id="IPR013785">
    <property type="entry name" value="Aldolase_TIM"/>
</dbReference>
<dbReference type="InterPro" id="IPR011060">
    <property type="entry name" value="RibuloseP-bd_barrel"/>
</dbReference>
<dbReference type="InterPro" id="IPR018204">
    <property type="entry name" value="Trp_synthase_alpha_AS"/>
</dbReference>
<dbReference type="InterPro" id="IPR002028">
    <property type="entry name" value="Trp_synthase_suA"/>
</dbReference>
<dbReference type="NCBIfam" id="TIGR00262">
    <property type="entry name" value="trpA"/>
    <property type="match status" value="1"/>
</dbReference>
<dbReference type="PANTHER" id="PTHR43406:SF1">
    <property type="entry name" value="TRYPTOPHAN SYNTHASE ALPHA CHAIN, CHLOROPLASTIC"/>
    <property type="match status" value="1"/>
</dbReference>
<dbReference type="PANTHER" id="PTHR43406">
    <property type="entry name" value="TRYPTOPHAN SYNTHASE, ALPHA CHAIN"/>
    <property type="match status" value="1"/>
</dbReference>
<dbReference type="Pfam" id="PF00290">
    <property type="entry name" value="Trp_syntA"/>
    <property type="match status" value="1"/>
</dbReference>
<dbReference type="SUPFAM" id="SSF51366">
    <property type="entry name" value="Ribulose-phoshate binding barrel"/>
    <property type="match status" value="1"/>
</dbReference>
<dbReference type="PROSITE" id="PS00167">
    <property type="entry name" value="TRP_SYNTHASE_ALPHA"/>
    <property type="match status" value="1"/>
</dbReference>
<proteinExistence type="inferred from homology"/>
<gene>
    <name evidence="1" type="primary">trpA</name>
    <name type="ordered locus">Cphamn1_0786</name>
</gene>
<protein>
    <recommendedName>
        <fullName evidence="1">Tryptophan synthase alpha chain</fullName>
        <ecNumber evidence="1">4.2.1.20</ecNumber>
    </recommendedName>
</protein>
<accession>B3ENW0</accession>
<comment type="function">
    <text evidence="1">The alpha subunit is responsible for the aldol cleavage of indoleglycerol phosphate to indole and glyceraldehyde 3-phosphate.</text>
</comment>
<comment type="catalytic activity">
    <reaction evidence="1">
        <text>(1S,2R)-1-C-(indol-3-yl)glycerol 3-phosphate + L-serine = D-glyceraldehyde 3-phosphate + L-tryptophan + H2O</text>
        <dbReference type="Rhea" id="RHEA:10532"/>
        <dbReference type="ChEBI" id="CHEBI:15377"/>
        <dbReference type="ChEBI" id="CHEBI:33384"/>
        <dbReference type="ChEBI" id="CHEBI:57912"/>
        <dbReference type="ChEBI" id="CHEBI:58866"/>
        <dbReference type="ChEBI" id="CHEBI:59776"/>
        <dbReference type="EC" id="4.2.1.20"/>
    </reaction>
</comment>
<comment type="pathway">
    <text evidence="1">Amino-acid biosynthesis; L-tryptophan biosynthesis; L-tryptophan from chorismate: step 5/5.</text>
</comment>
<comment type="subunit">
    <text evidence="1">Tetramer of two alpha and two beta chains.</text>
</comment>
<comment type="similarity">
    <text evidence="1">Belongs to the TrpA family.</text>
</comment>
<sequence>MAQNRVSRLMQEDRKFLIAYYMPEFPLPGSTLPVLEALQKSGVDIIELGMPYSDPIGDGPVIQDAAHTAIGNGVHIAGILDLVRKARAGEGCEKITVPLLLMGYCSPLIAYGGDCFLSDASEAGVDGLLIPDLPPEEAEDFLFRARGFGLSVIFFISPETPPERIGMIDGLSTDFSYCFAVNATTGTAKLAGADSERDIESYLRRVREHTKKKFVVGFGIKDRARVEKMWNLADGAVVGTALLQAIRNASTPEEVALMTAEFWKTLKS</sequence>
<name>TRPA_CHLPB</name>
<organism>
    <name type="scientific">Chlorobium phaeobacteroides (strain BS1)</name>
    <dbReference type="NCBI Taxonomy" id="331678"/>
    <lineage>
        <taxon>Bacteria</taxon>
        <taxon>Pseudomonadati</taxon>
        <taxon>Chlorobiota</taxon>
        <taxon>Chlorobiia</taxon>
        <taxon>Chlorobiales</taxon>
        <taxon>Chlorobiaceae</taxon>
        <taxon>Chlorobium/Pelodictyon group</taxon>
        <taxon>Chlorobium</taxon>
    </lineage>
</organism>